<name>ISPDF_BRUA4</name>
<sequence length="407" mass="43721">MQPLAEATTISKIAAVIVAAGRGERAGQSIEGPKQYRRIGGEAVLARTLRAFIDCPLVDSIVVVIHPDDHVLYERALQENCDTILVVNGGATRQESTRLGLLALRDYAPQYVMIHDGVRPFVSQDLLKRIVENLAPDEGVLPALAVSDTLKQSATDGTVKTTVPRVGLFAAQTPQAFPYTPILDAHEKAFAISRSDFTDDAAIAEWQSIAVRIIEGSADNTKLTWAKDIEMADKRLRQDHVSFPDIRTGNGYDVHSFEPGDHVTLCGVKIPHEAKLNGHSDADVGLHALTDALLATRGAGDIGTHFPPSDPQWKGAASRIFIEHAANIVREAGGRIANVDVTFISEAPKIGPHRAAMTEALCDMLGIAADRVSIKATTNEKLGFVGRREGIAAIATATVIYPGEVPE</sequence>
<dbReference type="EC" id="2.7.7.60" evidence="1"/>
<dbReference type="EC" id="4.6.1.12" evidence="1"/>
<dbReference type="EMBL" id="CP000758">
    <property type="protein sequence ID" value="ABS14785.1"/>
    <property type="molecule type" value="Genomic_DNA"/>
</dbReference>
<dbReference type="RefSeq" id="WP_012091979.1">
    <property type="nucleotide sequence ID" value="NC_009667.1"/>
</dbReference>
<dbReference type="SMR" id="A6X0N1"/>
<dbReference type="STRING" id="439375.Oant_2069"/>
<dbReference type="KEGG" id="oan:Oant_2069"/>
<dbReference type="PATRIC" id="fig|439375.7.peg.2175"/>
<dbReference type="eggNOG" id="COG0245">
    <property type="taxonomic scope" value="Bacteria"/>
</dbReference>
<dbReference type="eggNOG" id="COG1211">
    <property type="taxonomic scope" value="Bacteria"/>
</dbReference>
<dbReference type="HOGENOM" id="CLU_042800_1_1_5"/>
<dbReference type="PhylomeDB" id="A6X0N1"/>
<dbReference type="UniPathway" id="UPA00056">
    <property type="reaction ID" value="UER00093"/>
</dbReference>
<dbReference type="UniPathway" id="UPA00056">
    <property type="reaction ID" value="UER00095"/>
</dbReference>
<dbReference type="Proteomes" id="UP000002301">
    <property type="component" value="Chromosome 1"/>
</dbReference>
<dbReference type="GO" id="GO:0008685">
    <property type="term" value="F:2-C-methyl-D-erythritol 2,4-cyclodiphosphate synthase activity"/>
    <property type="evidence" value="ECO:0007669"/>
    <property type="project" value="UniProtKB-UniRule"/>
</dbReference>
<dbReference type="GO" id="GO:0050518">
    <property type="term" value="F:2-C-methyl-D-erythritol 4-phosphate cytidylyltransferase activity"/>
    <property type="evidence" value="ECO:0007669"/>
    <property type="project" value="UniProtKB-UniRule"/>
</dbReference>
<dbReference type="GO" id="GO:0046872">
    <property type="term" value="F:metal ion binding"/>
    <property type="evidence" value="ECO:0007669"/>
    <property type="project" value="UniProtKB-KW"/>
</dbReference>
<dbReference type="GO" id="GO:0019288">
    <property type="term" value="P:isopentenyl diphosphate biosynthetic process, methylerythritol 4-phosphate pathway"/>
    <property type="evidence" value="ECO:0007669"/>
    <property type="project" value="UniProtKB-UniRule"/>
</dbReference>
<dbReference type="GO" id="GO:0016114">
    <property type="term" value="P:terpenoid biosynthetic process"/>
    <property type="evidence" value="ECO:0007669"/>
    <property type="project" value="InterPro"/>
</dbReference>
<dbReference type="CDD" id="cd02516">
    <property type="entry name" value="CDP-ME_synthetase"/>
    <property type="match status" value="1"/>
</dbReference>
<dbReference type="CDD" id="cd00554">
    <property type="entry name" value="MECDP_synthase"/>
    <property type="match status" value="1"/>
</dbReference>
<dbReference type="FunFam" id="3.90.550.10:FF:000003">
    <property type="entry name" value="2-C-methyl-D-erythritol 4-phosphate cytidylyltransferase"/>
    <property type="match status" value="1"/>
</dbReference>
<dbReference type="Gene3D" id="3.30.1330.50">
    <property type="entry name" value="2-C-methyl-D-erythritol 2,4-cyclodiphosphate synthase"/>
    <property type="match status" value="1"/>
</dbReference>
<dbReference type="Gene3D" id="3.90.550.10">
    <property type="entry name" value="Spore Coat Polysaccharide Biosynthesis Protein SpsA, Chain A"/>
    <property type="match status" value="1"/>
</dbReference>
<dbReference type="HAMAP" id="MF_00108">
    <property type="entry name" value="IspD"/>
    <property type="match status" value="1"/>
</dbReference>
<dbReference type="HAMAP" id="MF_01520">
    <property type="entry name" value="IspDF"/>
    <property type="match status" value="1"/>
</dbReference>
<dbReference type="HAMAP" id="MF_00107">
    <property type="entry name" value="IspF"/>
    <property type="match status" value="1"/>
</dbReference>
<dbReference type="InterPro" id="IPR001228">
    <property type="entry name" value="IspD"/>
</dbReference>
<dbReference type="InterPro" id="IPR026596">
    <property type="entry name" value="IspD/F"/>
</dbReference>
<dbReference type="InterPro" id="IPR034683">
    <property type="entry name" value="IspD/TarI"/>
</dbReference>
<dbReference type="InterPro" id="IPR018294">
    <property type="entry name" value="ISPD_synthase_CS"/>
</dbReference>
<dbReference type="InterPro" id="IPR003526">
    <property type="entry name" value="MECDP_synthase"/>
</dbReference>
<dbReference type="InterPro" id="IPR020555">
    <property type="entry name" value="MECDP_synthase_CS"/>
</dbReference>
<dbReference type="InterPro" id="IPR036571">
    <property type="entry name" value="MECDP_synthase_sf"/>
</dbReference>
<dbReference type="InterPro" id="IPR029044">
    <property type="entry name" value="Nucleotide-diphossugar_trans"/>
</dbReference>
<dbReference type="NCBIfam" id="TIGR00453">
    <property type="entry name" value="ispD"/>
    <property type="match status" value="1"/>
</dbReference>
<dbReference type="NCBIfam" id="TIGR00151">
    <property type="entry name" value="ispF"/>
    <property type="match status" value="1"/>
</dbReference>
<dbReference type="NCBIfam" id="NF006899">
    <property type="entry name" value="PRK09382.1"/>
    <property type="match status" value="1"/>
</dbReference>
<dbReference type="PANTHER" id="PTHR43181">
    <property type="entry name" value="2-C-METHYL-D-ERYTHRITOL 2,4-CYCLODIPHOSPHATE SYNTHASE, CHLOROPLASTIC"/>
    <property type="match status" value="1"/>
</dbReference>
<dbReference type="PANTHER" id="PTHR43181:SF1">
    <property type="entry name" value="2-C-METHYL-D-ERYTHRITOL 2,4-CYCLODIPHOSPHATE SYNTHASE, CHLOROPLASTIC"/>
    <property type="match status" value="1"/>
</dbReference>
<dbReference type="Pfam" id="PF01128">
    <property type="entry name" value="IspD"/>
    <property type="match status" value="1"/>
</dbReference>
<dbReference type="Pfam" id="PF02542">
    <property type="entry name" value="YgbB"/>
    <property type="match status" value="1"/>
</dbReference>
<dbReference type="SUPFAM" id="SSF69765">
    <property type="entry name" value="IpsF-like"/>
    <property type="match status" value="1"/>
</dbReference>
<dbReference type="SUPFAM" id="SSF53448">
    <property type="entry name" value="Nucleotide-diphospho-sugar transferases"/>
    <property type="match status" value="1"/>
</dbReference>
<dbReference type="PROSITE" id="PS01295">
    <property type="entry name" value="ISPD"/>
    <property type="match status" value="1"/>
</dbReference>
<dbReference type="PROSITE" id="PS01350">
    <property type="entry name" value="ISPF"/>
    <property type="match status" value="1"/>
</dbReference>
<keyword id="KW-0414">Isoprene biosynthesis</keyword>
<keyword id="KW-0456">Lyase</keyword>
<keyword id="KW-0479">Metal-binding</keyword>
<keyword id="KW-0511">Multifunctional enzyme</keyword>
<keyword id="KW-0548">Nucleotidyltransferase</keyword>
<keyword id="KW-1185">Reference proteome</keyword>
<keyword id="KW-0808">Transferase</keyword>
<proteinExistence type="inferred from homology"/>
<feature type="chain" id="PRO_0000315554" description="Bifunctional enzyme IspD/IspF">
    <location>
        <begin position="1"/>
        <end position="407"/>
    </location>
</feature>
<feature type="region of interest" description="2-C-methyl-D-erythritol 4-phosphate cytidylyltransferase" evidence="1">
    <location>
        <begin position="1"/>
        <end position="246"/>
    </location>
</feature>
<feature type="region of interest" description="2-C-methyl-D-erythritol 2,4-cyclodiphosphate synthase" evidence="1">
    <location>
        <begin position="247"/>
        <end position="407"/>
    </location>
</feature>
<feature type="binding site" evidence="1">
    <location>
        <begin position="253"/>
        <end position="255"/>
    </location>
    <ligand>
        <name>4-CDP-2-C-methyl-D-erythritol 2-phosphate</name>
        <dbReference type="ChEBI" id="CHEBI:57919"/>
    </ligand>
</feature>
<feature type="binding site" evidence="1">
    <location>
        <position position="253"/>
    </location>
    <ligand>
        <name>a divalent metal cation</name>
        <dbReference type="ChEBI" id="CHEBI:60240"/>
    </ligand>
</feature>
<feature type="binding site" evidence="1">
    <location>
        <position position="255"/>
    </location>
    <ligand>
        <name>a divalent metal cation</name>
        <dbReference type="ChEBI" id="CHEBI:60240"/>
    </ligand>
</feature>
<feature type="binding site" evidence="1">
    <location>
        <begin position="279"/>
        <end position="280"/>
    </location>
    <ligand>
        <name>4-CDP-2-C-methyl-D-erythritol 2-phosphate</name>
        <dbReference type="ChEBI" id="CHEBI:57919"/>
    </ligand>
</feature>
<feature type="binding site" evidence="1">
    <location>
        <position position="287"/>
    </location>
    <ligand>
        <name>a divalent metal cation</name>
        <dbReference type="ChEBI" id="CHEBI:60240"/>
    </ligand>
</feature>
<feature type="binding site" evidence="1">
    <location>
        <begin position="301"/>
        <end position="303"/>
    </location>
    <ligand>
        <name>4-CDP-2-C-methyl-D-erythritol 2-phosphate</name>
        <dbReference type="ChEBI" id="CHEBI:57919"/>
    </ligand>
</feature>
<feature type="binding site" evidence="1">
    <location>
        <begin position="377"/>
        <end position="380"/>
    </location>
    <ligand>
        <name>4-CDP-2-C-methyl-D-erythritol 2-phosphate</name>
        <dbReference type="ChEBI" id="CHEBI:57919"/>
    </ligand>
</feature>
<feature type="binding site" evidence="1">
    <location>
        <position position="384"/>
    </location>
    <ligand>
        <name>4-CDP-2-C-methyl-D-erythritol 2-phosphate</name>
        <dbReference type="ChEBI" id="CHEBI:57919"/>
    </ligand>
</feature>
<feature type="binding site" evidence="1">
    <location>
        <position position="387"/>
    </location>
    <ligand>
        <name>4-CDP-2-C-methyl-D-erythritol 2-phosphate</name>
        <dbReference type="ChEBI" id="CHEBI:57919"/>
    </ligand>
</feature>
<feature type="site" description="Transition state stabilizer" evidence="1">
    <location>
        <position position="25"/>
    </location>
</feature>
<feature type="site" description="Transition state stabilizer" evidence="1">
    <location>
        <position position="34"/>
    </location>
</feature>
<feature type="site" description="Positions MEP for the nucleophilic attack" evidence="1">
    <location>
        <position position="165"/>
    </location>
</feature>
<feature type="site" description="Positions MEP for the nucleophilic attack" evidence="1">
    <location>
        <position position="222"/>
    </location>
</feature>
<feature type="site" description="Transition state stabilizer" evidence="1">
    <location>
        <position position="279"/>
    </location>
</feature>
<feature type="site" description="Transition state stabilizer" evidence="1">
    <location>
        <position position="378"/>
    </location>
</feature>
<evidence type="ECO:0000255" key="1">
    <source>
        <dbReference type="HAMAP-Rule" id="MF_01520"/>
    </source>
</evidence>
<reference key="1">
    <citation type="journal article" date="2011" name="J. Bacteriol.">
        <title>Genome of Ochrobactrum anthropi ATCC 49188 T, a versatile opportunistic pathogen and symbiont of several eukaryotic hosts.</title>
        <authorList>
            <person name="Chain P.S."/>
            <person name="Lang D.M."/>
            <person name="Comerci D.J."/>
            <person name="Malfatti S.A."/>
            <person name="Vergez L.M."/>
            <person name="Shin M."/>
            <person name="Ugalde R.A."/>
            <person name="Garcia E."/>
            <person name="Tolmasky M.E."/>
        </authorList>
    </citation>
    <scope>NUCLEOTIDE SEQUENCE [LARGE SCALE GENOMIC DNA]</scope>
    <source>
        <strain>ATCC 49188 / DSM 6882 / CCUG 24695 / JCM 21032 / LMG 3331 / NBRC 15819 / NCTC 12168 / Alc 37</strain>
    </source>
</reference>
<organism>
    <name type="scientific">Brucella anthropi (strain ATCC 49188 / DSM 6882 / CCUG 24695 / JCM 21032 / LMG 3331 / NBRC 15819 / NCTC 12168 / Alc 37)</name>
    <name type="common">Ochrobactrum anthropi</name>
    <dbReference type="NCBI Taxonomy" id="439375"/>
    <lineage>
        <taxon>Bacteria</taxon>
        <taxon>Pseudomonadati</taxon>
        <taxon>Pseudomonadota</taxon>
        <taxon>Alphaproteobacteria</taxon>
        <taxon>Hyphomicrobiales</taxon>
        <taxon>Brucellaceae</taxon>
        <taxon>Brucella/Ochrobactrum group</taxon>
        <taxon>Brucella</taxon>
    </lineage>
</organism>
<gene>
    <name evidence="1" type="primary">ispDF</name>
    <name type="ordered locus">Oant_2069</name>
</gene>
<comment type="function">
    <text evidence="1">Bifunctional enzyme that catalyzes the formation of 4-diphosphocytidyl-2-C-methyl-D-erythritol from CTP and 2-C-methyl-D-erythritol 4-phosphate (MEP) (IspD), and catalyzes the conversion of 4-diphosphocytidyl-2-C-methyl-D-erythritol 2-phosphate (CDP-ME2P) to 2-C-methyl-D-erythritol 2,4-cyclodiphosphate (ME-CPP) with a corresponding release of cytidine 5-monophosphate (CMP) (IspF).</text>
</comment>
<comment type="catalytic activity">
    <reaction evidence="1">
        <text>2-C-methyl-D-erythritol 4-phosphate + CTP + H(+) = 4-CDP-2-C-methyl-D-erythritol + diphosphate</text>
        <dbReference type="Rhea" id="RHEA:13429"/>
        <dbReference type="ChEBI" id="CHEBI:15378"/>
        <dbReference type="ChEBI" id="CHEBI:33019"/>
        <dbReference type="ChEBI" id="CHEBI:37563"/>
        <dbReference type="ChEBI" id="CHEBI:57823"/>
        <dbReference type="ChEBI" id="CHEBI:58262"/>
        <dbReference type="EC" id="2.7.7.60"/>
    </reaction>
</comment>
<comment type="catalytic activity">
    <reaction evidence="1">
        <text>4-CDP-2-C-methyl-D-erythritol 2-phosphate = 2-C-methyl-D-erythritol 2,4-cyclic diphosphate + CMP</text>
        <dbReference type="Rhea" id="RHEA:23864"/>
        <dbReference type="ChEBI" id="CHEBI:57919"/>
        <dbReference type="ChEBI" id="CHEBI:58483"/>
        <dbReference type="ChEBI" id="CHEBI:60377"/>
        <dbReference type="EC" id="4.6.1.12"/>
    </reaction>
</comment>
<comment type="cofactor">
    <cofactor evidence="1">
        <name>a divalent metal cation</name>
        <dbReference type="ChEBI" id="CHEBI:60240"/>
    </cofactor>
</comment>
<comment type="pathway">
    <text evidence="1">Isoprenoid biosynthesis; isopentenyl diphosphate biosynthesis via DXP pathway; isopentenyl diphosphate from 1-deoxy-D-xylulose 5-phosphate: step 2/6.</text>
</comment>
<comment type="pathway">
    <text evidence="1">Isoprenoid biosynthesis; isopentenyl diphosphate biosynthesis via DXP pathway; isopentenyl diphosphate from 1-deoxy-D-xylulose 5-phosphate: step 4/6.</text>
</comment>
<comment type="similarity">
    <text evidence="1">In the N-terminal section; belongs to the IspD/TarI cytidylyltransferase family. IspD subfamily.</text>
</comment>
<comment type="similarity">
    <text evidence="1">In the C-terminal section; belongs to the IspF family.</text>
</comment>
<protein>
    <recommendedName>
        <fullName evidence="1">Bifunctional enzyme IspD/IspF</fullName>
    </recommendedName>
    <domain>
        <recommendedName>
            <fullName evidence="1">2-C-methyl-D-erythritol 4-phosphate cytidylyltransferase</fullName>
            <ecNumber evidence="1">2.7.7.60</ecNumber>
        </recommendedName>
        <alternativeName>
            <fullName evidence="1">4-diphosphocytidyl-2C-methyl-D-erythritol synthase</fullName>
        </alternativeName>
        <alternativeName>
            <fullName evidence="1">MEP cytidylyltransferase</fullName>
            <shortName evidence="1">MCT</shortName>
        </alternativeName>
    </domain>
    <domain>
        <recommendedName>
            <fullName evidence="1">2-C-methyl-D-erythritol 2,4-cyclodiphosphate synthase</fullName>
            <shortName evidence="1">MECDP-synthase</shortName>
            <shortName evidence="1">MECPP-synthase</shortName>
            <shortName evidence="1">MECPS</shortName>
            <ecNumber evidence="1">4.6.1.12</ecNumber>
        </recommendedName>
    </domain>
</protein>
<accession>A6X0N1</accession>